<sequence>MAISAAQNPLYIGFDLSTQQLKGLVVNSDLKVVYLSKFDFDADSRGFPIKKGVITNEAEHEVYAPVAMWLQALDTVLDGLRQQGLDFSRVKGISGAGQQHGSVYWGDRAEDLLQNLDPSKSLEAQLSDAFSHPYSPNWQDASTQKECDEFDAYLGSQEALAQATGSKAHHRFTGPQILRFQRKYPDVYRHTQRISLVSSFLASLFLGRFAPFDISDVCGMNLWNIKQGAYDEKLLKLCAGSFGVDDLKRKLGPVYEDGGLNLGSIHRYYVDRYGFNPDCTIIPATGDNPATILALPLRPSDAMVSLGTSTTFLMSTPSYQPHPATHFFNHPTTAGLYMFMLCYKNGGLAREQIRDAVNDKLGSSDDVWANFDRTALQTPPLGQKADSDPMKMGLFFPRPEIVPNLRSGQWRFDYNPADGSLHETTAGWDQPLDEARAIIESQMLSLRLRSRGLTSSPGDGKPPQPRRVYLVGGGSKNKAIAKIAGEILGGSEGVYKLEIGDNACALGAAYKAVWALERSNGQTFEDLIGQRWKEEDFIEKIADGYQPGVFEKYGQAVEGFEKMELQVLQQEKK</sequence>
<keyword id="KW-0067">ATP-binding</keyword>
<keyword id="KW-0119">Carbohydrate metabolism</keyword>
<keyword id="KW-0963">Cytoplasm</keyword>
<keyword id="KW-0418">Kinase</keyword>
<keyword id="KW-0547">Nucleotide-binding</keyword>
<keyword id="KW-1185">Reference proteome</keyword>
<keyword id="KW-0808">Transferase</keyword>
<keyword id="KW-0859">Xylose metabolism</keyword>
<feature type="chain" id="PRO_0000393523" description="Probable D-xylulose kinase A">
    <location>
        <begin position="1"/>
        <end position="573"/>
    </location>
</feature>
<feature type="binding site" evidence="1">
    <location>
        <position position="100"/>
    </location>
    <ligand>
        <name>substrate</name>
    </ligand>
</feature>
<feature type="binding site" evidence="1">
    <location>
        <position position="171"/>
    </location>
    <ligand>
        <name>substrate</name>
    </ligand>
</feature>
<feature type="binding site" evidence="1">
    <location>
        <position position="287"/>
    </location>
    <ligand>
        <name>substrate</name>
    </ligand>
</feature>
<feature type="binding site" evidence="1">
    <location>
        <position position="288"/>
    </location>
    <ligand>
        <name>substrate</name>
    </ligand>
</feature>
<feature type="binding site" evidence="1">
    <location>
        <position position="368"/>
    </location>
    <ligand>
        <name>ATP</name>
        <dbReference type="ChEBI" id="CHEBI:30616"/>
    </ligand>
</feature>
<feature type="binding site" evidence="1">
    <location>
        <begin position="473"/>
        <end position="474"/>
    </location>
    <ligand>
        <name>ATP</name>
        <dbReference type="ChEBI" id="CHEBI:30616"/>
    </ligand>
</feature>
<feature type="binding site" evidence="1">
    <location>
        <position position="477"/>
    </location>
    <ligand>
        <name>ATP</name>
        <dbReference type="ChEBI" id="CHEBI:30616"/>
    </ligand>
</feature>
<protein>
    <recommendedName>
        <fullName>Probable D-xylulose kinase A</fullName>
        <shortName>Xylulokinase A</shortName>
        <ecNumber>2.7.1.17</ecNumber>
    </recommendedName>
</protein>
<organism>
    <name type="scientific">Aspergillus terreus (strain NIH 2624 / FGSC A1156)</name>
    <dbReference type="NCBI Taxonomy" id="341663"/>
    <lineage>
        <taxon>Eukaryota</taxon>
        <taxon>Fungi</taxon>
        <taxon>Dikarya</taxon>
        <taxon>Ascomycota</taxon>
        <taxon>Pezizomycotina</taxon>
        <taxon>Eurotiomycetes</taxon>
        <taxon>Eurotiomycetidae</taxon>
        <taxon>Eurotiales</taxon>
        <taxon>Aspergillaceae</taxon>
        <taxon>Aspergillus</taxon>
        <taxon>Aspergillus subgen. Circumdati</taxon>
    </lineage>
</organism>
<accession>Q0CIL2</accession>
<name>XKS1_ASPTN</name>
<comment type="function">
    <text evidence="1">Highly specific D-xylulose kinase which participates in the catabolism of xylose. Xylose is a major component of hemicelluloses such as xylan. Most fungi utilize D-xylose via three enzymatic reactions, xylose reductase (XR), xylitol dehydrogenase (XDH), and xylulokinase, to form xylulose 5-phosphate, which enters pentose phosphate pathway (By similarity).</text>
</comment>
<comment type="catalytic activity">
    <reaction>
        <text>D-xylulose + ATP = D-xylulose 5-phosphate + ADP + H(+)</text>
        <dbReference type="Rhea" id="RHEA:10964"/>
        <dbReference type="ChEBI" id="CHEBI:15378"/>
        <dbReference type="ChEBI" id="CHEBI:17140"/>
        <dbReference type="ChEBI" id="CHEBI:30616"/>
        <dbReference type="ChEBI" id="CHEBI:57737"/>
        <dbReference type="ChEBI" id="CHEBI:456216"/>
        <dbReference type="EC" id="2.7.1.17"/>
    </reaction>
</comment>
<comment type="subcellular location">
    <subcellularLocation>
        <location evidence="1">Cytoplasm</location>
    </subcellularLocation>
</comment>
<comment type="induction">
    <text>By D-xylose, L-arabinose or L-arabitol.</text>
</comment>
<comment type="similarity">
    <text evidence="2">Belongs to the FGGY kinase family.</text>
</comment>
<gene>
    <name type="primary">xkiA</name>
    <name type="ORF">ATEG_06472</name>
</gene>
<proteinExistence type="evidence at transcript level"/>
<reference key="1">
    <citation type="submission" date="2005-09" db="EMBL/GenBank/DDBJ databases">
        <title>Annotation of the Aspergillus terreus NIH2624 genome.</title>
        <authorList>
            <person name="Birren B.W."/>
            <person name="Lander E.S."/>
            <person name="Galagan J.E."/>
            <person name="Nusbaum C."/>
            <person name="Devon K."/>
            <person name="Henn M."/>
            <person name="Ma L.-J."/>
            <person name="Jaffe D.B."/>
            <person name="Butler J."/>
            <person name="Alvarez P."/>
            <person name="Gnerre S."/>
            <person name="Grabherr M."/>
            <person name="Kleber M."/>
            <person name="Mauceli E.W."/>
            <person name="Brockman W."/>
            <person name="Rounsley S."/>
            <person name="Young S.K."/>
            <person name="LaButti K."/>
            <person name="Pushparaj V."/>
            <person name="DeCaprio D."/>
            <person name="Crawford M."/>
            <person name="Koehrsen M."/>
            <person name="Engels R."/>
            <person name="Montgomery P."/>
            <person name="Pearson M."/>
            <person name="Howarth C."/>
            <person name="Larson L."/>
            <person name="Luoma S."/>
            <person name="White J."/>
            <person name="Alvarado L."/>
            <person name="Kodira C.D."/>
            <person name="Zeng Q."/>
            <person name="Oleary S."/>
            <person name="Yandava C."/>
            <person name="Denning D.W."/>
            <person name="Nierman W.C."/>
            <person name="Milne T."/>
            <person name="Madden K."/>
        </authorList>
    </citation>
    <scope>NUCLEOTIDE SEQUENCE [LARGE SCALE GENOMIC DNA]</scope>
    <source>
        <strain>NIH 2624 / FGSC A1156</strain>
    </source>
</reference>
<dbReference type="EC" id="2.7.1.17"/>
<dbReference type="EMBL" id="CH476602">
    <property type="protein sequence ID" value="EAU33016.1"/>
    <property type="molecule type" value="Genomic_DNA"/>
</dbReference>
<dbReference type="RefSeq" id="XP_001215650.1">
    <property type="nucleotide sequence ID" value="XM_001215650.1"/>
</dbReference>
<dbReference type="SMR" id="Q0CIL2"/>
<dbReference type="STRING" id="341663.Q0CIL2"/>
<dbReference type="EnsemblFungi" id="EAU33016">
    <property type="protein sequence ID" value="EAU33016"/>
    <property type="gene ID" value="ATEG_06472"/>
</dbReference>
<dbReference type="GeneID" id="4322249"/>
<dbReference type="VEuPathDB" id="FungiDB:ATEG_06472"/>
<dbReference type="eggNOG" id="KOG2531">
    <property type="taxonomic scope" value="Eukaryota"/>
</dbReference>
<dbReference type="HOGENOM" id="CLU_016149_5_0_1"/>
<dbReference type="OMA" id="NSCALGG"/>
<dbReference type="OrthoDB" id="1728974at2759"/>
<dbReference type="Proteomes" id="UP000007963">
    <property type="component" value="Unassembled WGS sequence"/>
</dbReference>
<dbReference type="GO" id="GO:0005829">
    <property type="term" value="C:cytosol"/>
    <property type="evidence" value="ECO:0007669"/>
    <property type="project" value="TreeGrafter"/>
</dbReference>
<dbReference type="GO" id="GO:0005524">
    <property type="term" value="F:ATP binding"/>
    <property type="evidence" value="ECO:0007669"/>
    <property type="project" value="UniProtKB-KW"/>
</dbReference>
<dbReference type="GO" id="GO:0004856">
    <property type="term" value="F:D-xylulokinase activity"/>
    <property type="evidence" value="ECO:0007669"/>
    <property type="project" value="UniProtKB-EC"/>
</dbReference>
<dbReference type="GO" id="GO:0042732">
    <property type="term" value="P:D-xylose metabolic process"/>
    <property type="evidence" value="ECO:0007669"/>
    <property type="project" value="UniProtKB-KW"/>
</dbReference>
<dbReference type="GO" id="GO:0005997">
    <property type="term" value="P:xylulose metabolic process"/>
    <property type="evidence" value="ECO:0007669"/>
    <property type="project" value="TreeGrafter"/>
</dbReference>
<dbReference type="CDD" id="cd07776">
    <property type="entry name" value="ASKHA_NBD_FGGY_SpXK-like"/>
    <property type="match status" value="1"/>
</dbReference>
<dbReference type="FunFam" id="3.30.420.40:FF:000118">
    <property type="entry name" value="Xylulose kinase 2"/>
    <property type="match status" value="1"/>
</dbReference>
<dbReference type="Gene3D" id="3.30.420.40">
    <property type="match status" value="2"/>
</dbReference>
<dbReference type="InterPro" id="IPR043129">
    <property type="entry name" value="ATPase_NBD"/>
</dbReference>
<dbReference type="InterPro" id="IPR042024">
    <property type="entry name" value="D-XK_euk"/>
</dbReference>
<dbReference type="InterPro" id="IPR018485">
    <property type="entry name" value="FGGY_C"/>
</dbReference>
<dbReference type="InterPro" id="IPR018484">
    <property type="entry name" value="FGGY_N"/>
</dbReference>
<dbReference type="PANTHER" id="PTHR10196">
    <property type="entry name" value="SUGAR KINASE"/>
    <property type="match status" value="1"/>
</dbReference>
<dbReference type="PANTHER" id="PTHR10196:SF57">
    <property type="entry name" value="XYLULOSE KINASE"/>
    <property type="match status" value="1"/>
</dbReference>
<dbReference type="Pfam" id="PF02782">
    <property type="entry name" value="FGGY_C"/>
    <property type="match status" value="1"/>
</dbReference>
<dbReference type="Pfam" id="PF00370">
    <property type="entry name" value="FGGY_N"/>
    <property type="match status" value="1"/>
</dbReference>
<dbReference type="SUPFAM" id="SSF53067">
    <property type="entry name" value="Actin-like ATPase domain"/>
    <property type="match status" value="2"/>
</dbReference>
<evidence type="ECO:0000250" key="1"/>
<evidence type="ECO:0000305" key="2"/>